<evidence type="ECO:0000255" key="1">
    <source>
        <dbReference type="HAMAP-Rule" id="MF_01264"/>
    </source>
</evidence>
<name>CCA_PYRFU</name>
<sequence length="453" mass="52447">MDIEEVIEEALQKIVPKEEEERFVKTLMSEIEEKARETIEELNLNAKPYFVGSLAKNTYLAGDHDLDLFIAFPLDTSLEKLREKGLEAGKVLGKKLGRYELAYAEHPYVRAEYKGVKVDIVPCYDVKSWKDVRTAVDRSILHTKWVIENLKGKNNEVRLFKRFLKGIKAYGSEIYVRGFSGYLAEILVIEFGSFLSVLEKADFMLKKKIIDTGKWMKKESEITMKTIKREAEEDKPLIVIDPVDPRRNVAANLSWERFGLFYFSSMQFLEKPSLEFFFPGEKRGNYREELKRKGTHLVTLLFTPPKLVDDLLLPQVEKTAKGLAKALEIEGFKVFGIDYGRNFIFLEVDRVEKPRIEIKRGPLYFTSHGRRFYEKNEKVWIEGKDLMAEKKVGGFIVEVLEEIFKKGQFSAGKNVKEVIKSSDILIDFVPKPLANEAYLFLSREKFNVKRSTS</sequence>
<gene>
    <name evidence="1" type="primary">cca</name>
    <name type="ordered locus">PF0026</name>
</gene>
<dbReference type="EC" id="2.7.7.72" evidence="1"/>
<dbReference type="EMBL" id="AE009950">
    <property type="protein sequence ID" value="AAL80150.1"/>
    <property type="molecule type" value="Genomic_DNA"/>
</dbReference>
<dbReference type="RefSeq" id="WP_011011138.1">
    <property type="nucleotide sequence ID" value="NZ_CP023154.1"/>
</dbReference>
<dbReference type="SMR" id="Q8TH22"/>
<dbReference type="IntAct" id="Q8TH22">
    <property type="interactions" value="1"/>
</dbReference>
<dbReference type="STRING" id="186497.PF0026"/>
<dbReference type="PaxDb" id="186497-PF0026"/>
<dbReference type="GeneID" id="41711812"/>
<dbReference type="KEGG" id="pfu:PF0026"/>
<dbReference type="PATRIC" id="fig|186497.12.peg.28"/>
<dbReference type="eggNOG" id="arCOG04249">
    <property type="taxonomic scope" value="Archaea"/>
</dbReference>
<dbReference type="HOGENOM" id="CLU_044679_1_0_2"/>
<dbReference type="OrthoDB" id="7378at2157"/>
<dbReference type="PhylomeDB" id="Q8TH22"/>
<dbReference type="Proteomes" id="UP000001013">
    <property type="component" value="Chromosome"/>
</dbReference>
<dbReference type="GO" id="GO:0005524">
    <property type="term" value="F:ATP binding"/>
    <property type="evidence" value="ECO:0007669"/>
    <property type="project" value="UniProtKB-UniRule"/>
</dbReference>
<dbReference type="GO" id="GO:0004810">
    <property type="term" value="F:CCA tRNA nucleotidyltransferase activity"/>
    <property type="evidence" value="ECO:0007669"/>
    <property type="project" value="UniProtKB-UniRule"/>
</dbReference>
<dbReference type="GO" id="GO:0000287">
    <property type="term" value="F:magnesium ion binding"/>
    <property type="evidence" value="ECO:0007669"/>
    <property type="project" value="UniProtKB-UniRule"/>
</dbReference>
<dbReference type="GO" id="GO:0000049">
    <property type="term" value="F:tRNA binding"/>
    <property type="evidence" value="ECO:0007669"/>
    <property type="project" value="UniProtKB-UniRule"/>
</dbReference>
<dbReference type="GO" id="GO:0042245">
    <property type="term" value="P:RNA repair"/>
    <property type="evidence" value="ECO:0007669"/>
    <property type="project" value="UniProtKB-KW"/>
</dbReference>
<dbReference type="GO" id="GO:0001680">
    <property type="term" value="P:tRNA 3'-terminal CCA addition"/>
    <property type="evidence" value="ECO:0007669"/>
    <property type="project" value="UniProtKB-UniRule"/>
</dbReference>
<dbReference type="CDD" id="cd05400">
    <property type="entry name" value="NT_2-5OAS_ClassI-CCAase"/>
    <property type="match status" value="1"/>
</dbReference>
<dbReference type="Gene3D" id="3.30.70.1550">
    <property type="entry name" value="Archaeal tRNA CCA-adding enzyme catalytic domain"/>
    <property type="match status" value="1"/>
</dbReference>
<dbReference type="Gene3D" id="3.30.460.10">
    <property type="entry name" value="Beta Polymerase, domain 2"/>
    <property type="match status" value="1"/>
</dbReference>
<dbReference type="Gene3D" id="1.10.1410.30">
    <property type="entry name" value="CCA tRNA nucleotidyltransferase, domain 2"/>
    <property type="match status" value="1"/>
</dbReference>
<dbReference type="Gene3D" id="3.30.70.590">
    <property type="entry name" value="Poly(A) polymerase predicted RNA binding domain"/>
    <property type="match status" value="1"/>
</dbReference>
<dbReference type="HAMAP" id="MF_01264">
    <property type="entry name" value="CCA_arch"/>
    <property type="match status" value="1"/>
</dbReference>
<dbReference type="InterPro" id="IPR048833">
    <property type="entry name" value="CAA_C"/>
</dbReference>
<dbReference type="InterPro" id="IPR008229">
    <property type="entry name" value="CCA-adding_arc"/>
</dbReference>
<dbReference type="InterPro" id="IPR042090">
    <property type="entry name" value="CCA_tRNA_nucleotrans_2"/>
</dbReference>
<dbReference type="InterPro" id="IPR006116">
    <property type="entry name" value="NT_2-5OAS_ClassI-CCAase"/>
</dbReference>
<dbReference type="InterPro" id="IPR043519">
    <property type="entry name" value="NT_sf"/>
</dbReference>
<dbReference type="InterPro" id="IPR011068">
    <property type="entry name" value="NuclTrfase_I-like_C"/>
</dbReference>
<dbReference type="InterPro" id="IPR002934">
    <property type="entry name" value="Polymerase_NTP_transf_dom"/>
</dbReference>
<dbReference type="InterPro" id="IPR015329">
    <property type="entry name" value="tRNA_NucTransf2"/>
</dbReference>
<dbReference type="NCBIfam" id="TIGR03671">
    <property type="entry name" value="cca_archaeal"/>
    <property type="match status" value="1"/>
</dbReference>
<dbReference type="PANTHER" id="PTHR39643">
    <property type="entry name" value="CCA-ADDING ENZYME"/>
    <property type="match status" value="1"/>
</dbReference>
<dbReference type="PANTHER" id="PTHR39643:SF1">
    <property type="entry name" value="CCA-ADDING ENZYME"/>
    <property type="match status" value="1"/>
</dbReference>
<dbReference type="Pfam" id="PF21133">
    <property type="entry name" value="CAA_C"/>
    <property type="match status" value="1"/>
</dbReference>
<dbReference type="Pfam" id="PF01909">
    <property type="entry name" value="NTP_transf_2"/>
    <property type="match status" value="1"/>
</dbReference>
<dbReference type="Pfam" id="PF09249">
    <property type="entry name" value="tRNA_NucTransf2"/>
    <property type="match status" value="1"/>
</dbReference>
<dbReference type="PIRSF" id="PIRSF005335">
    <property type="entry name" value="CCA_arch"/>
    <property type="match status" value="1"/>
</dbReference>
<dbReference type="SUPFAM" id="SSF81301">
    <property type="entry name" value="Nucleotidyltransferase"/>
    <property type="match status" value="1"/>
</dbReference>
<dbReference type="SUPFAM" id="SSF55003">
    <property type="entry name" value="PAP/Archaeal CCA-adding enzyme, C-terminal domain"/>
    <property type="match status" value="1"/>
</dbReference>
<dbReference type="SUPFAM" id="SSF81631">
    <property type="entry name" value="PAP/OAS1 substrate-binding domain"/>
    <property type="match status" value="1"/>
</dbReference>
<reference key="1">
    <citation type="journal article" date="1999" name="Genetics">
        <title>Divergence of the hyperthermophilic archaea Pyrococcus furiosus and P. horikoshii inferred from complete genomic sequences.</title>
        <authorList>
            <person name="Maeder D.L."/>
            <person name="Weiss R.B."/>
            <person name="Dunn D.M."/>
            <person name="Cherry J.L."/>
            <person name="Gonzalez J.M."/>
            <person name="DiRuggiero J."/>
            <person name="Robb F.T."/>
        </authorList>
    </citation>
    <scope>NUCLEOTIDE SEQUENCE [LARGE SCALE GENOMIC DNA]</scope>
    <source>
        <strain>ATCC 43587 / DSM 3638 / JCM 8422 / Vc1</strain>
    </source>
</reference>
<accession>Q8TH22</accession>
<organism>
    <name type="scientific">Pyrococcus furiosus (strain ATCC 43587 / DSM 3638 / JCM 8422 / Vc1)</name>
    <dbReference type="NCBI Taxonomy" id="186497"/>
    <lineage>
        <taxon>Archaea</taxon>
        <taxon>Methanobacteriati</taxon>
        <taxon>Methanobacteriota</taxon>
        <taxon>Thermococci</taxon>
        <taxon>Thermococcales</taxon>
        <taxon>Thermococcaceae</taxon>
        <taxon>Pyrococcus</taxon>
    </lineage>
</organism>
<comment type="function">
    <text evidence="1">Catalyzes the addition and repair of the essential 3'-terminal CCA sequence in tRNAs without using a nucleic acid template. Adds these three nucleotides in the order of C, C, and A to the tRNA nucleotide-73, using CTP and ATP as substrates and producing inorganic pyrophosphate. tRNA 3'-terminal CCA addition is required both for tRNA processing and repair. Also involved in tRNA surveillance by mediating tandem CCA addition to generate a CCACCA at the 3' terminus of unstable tRNAs. While stable tRNAs receive only 3'-terminal CCA, unstable tRNAs are marked with CCACCA and rapidly degraded.</text>
</comment>
<comment type="catalytic activity">
    <reaction evidence="1">
        <text>a tRNA precursor + 2 CTP + ATP = a tRNA with a 3' CCA end + 3 diphosphate</text>
        <dbReference type="Rhea" id="RHEA:14433"/>
        <dbReference type="Rhea" id="RHEA-COMP:10465"/>
        <dbReference type="Rhea" id="RHEA-COMP:10468"/>
        <dbReference type="ChEBI" id="CHEBI:30616"/>
        <dbReference type="ChEBI" id="CHEBI:33019"/>
        <dbReference type="ChEBI" id="CHEBI:37563"/>
        <dbReference type="ChEBI" id="CHEBI:74896"/>
        <dbReference type="ChEBI" id="CHEBI:83071"/>
        <dbReference type="EC" id="2.7.7.72"/>
    </reaction>
</comment>
<comment type="catalytic activity">
    <reaction evidence="1">
        <text>a tRNA with a 3' CCA end + 2 CTP + ATP = a tRNA with a 3' CCACCA end + 3 diphosphate</text>
        <dbReference type="Rhea" id="RHEA:76235"/>
        <dbReference type="Rhea" id="RHEA-COMP:10468"/>
        <dbReference type="Rhea" id="RHEA-COMP:18655"/>
        <dbReference type="ChEBI" id="CHEBI:30616"/>
        <dbReference type="ChEBI" id="CHEBI:33019"/>
        <dbReference type="ChEBI" id="CHEBI:37563"/>
        <dbReference type="ChEBI" id="CHEBI:83071"/>
        <dbReference type="ChEBI" id="CHEBI:195187"/>
    </reaction>
    <physiologicalReaction direction="left-to-right" evidence="1">
        <dbReference type="Rhea" id="RHEA:76236"/>
    </physiologicalReaction>
</comment>
<comment type="cofactor">
    <cofactor evidence="1">
        <name>Mg(2+)</name>
        <dbReference type="ChEBI" id="CHEBI:18420"/>
    </cofactor>
</comment>
<comment type="subunit">
    <text evidence="1">Homodimer.</text>
</comment>
<comment type="miscellaneous">
    <text evidence="1">A single active site specifically recognizes both ATP and CTP and is responsible for their addition.</text>
</comment>
<comment type="similarity">
    <text evidence="1">Belongs to the tRNA nucleotidyltransferase/poly(A) polymerase family. Archaeal CCA-adding enzyme subfamily.</text>
</comment>
<protein>
    <recommendedName>
        <fullName evidence="1">CCA-adding enzyme</fullName>
        <ecNumber evidence="1">2.7.7.72</ecNumber>
    </recommendedName>
    <alternativeName>
        <fullName evidence="1">CCA tRNA nucleotidyltransferase</fullName>
    </alternativeName>
    <alternativeName>
        <fullName evidence="1">tRNA CCA-pyrophosphorylase</fullName>
    </alternativeName>
    <alternativeName>
        <fullName evidence="1">tRNA adenylyl-/cytidylyl- transferase</fullName>
    </alternativeName>
    <alternativeName>
        <fullName evidence="1">tRNA nucleotidyltransferase</fullName>
    </alternativeName>
    <alternativeName>
        <fullName evidence="1">tRNA-NT</fullName>
    </alternativeName>
</protein>
<proteinExistence type="inferred from homology"/>
<feature type="chain" id="PRO_0000139078" description="CCA-adding enzyme">
    <location>
        <begin position="1"/>
        <end position="453"/>
    </location>
</feature>
<feature type="binding site" evidence="1">
    <location>
        <position position="53"/>
    </location>
    <ligand>
        <name>ATP</name>
        <dbReference type="ChEBI" id="CHEBI:30616"/>
    </ligand>
</feature>
<feature type="binding site" evidence="1">
    <location>
        <position position="53"/>
    </location>
    <ligand>
        <name>CTP</name>
        <dbReference type="ChEBI" id="CHEBI:37563"/>
    </ligand>
</feature>
<feature type="binding site" evidence="1">
    <location>
        <position position="56"/>
    </location>
    <ligand>
        <name>ATP</name>
        <dbReference type="ChEBI" id="CHEBI:30616"/>
    </ligand>
</feature>
<feature type="binding site" evidence="1">
    <location>
        <position position="56"/>
    </location>
    <ligand>
        <name>CTP</name>
        <dbReference type="ChEBI" id="CHEBI:37563"/>
    </ligand>
</feature>
<feature type="binding site" evidence="1">
    <location>
        <position position="65"/>
    </location>
    <ligand>
        <name>Mg(2+)</name>
        <dbReference type="ChEBI" id="CHEBI:18420"/>
    </ligand>
</feature>
<feature type="binding site" evidence="1">
    <location>
        <position position="67"/>
    </location>
    <ligand>
        <name>Mg(2+)</name>
        <dbReference type="ChEBI" id="CHEBI:18420"/>
    </ligand>
</feature>
<feature type="binding site" evidence="1">
    <location>
        <position position="119"/>
    </location>
    <ligand>
        <name>Mg(2+)</name>
        <dbReference type="ChEBI" id="CHEBI:18420"/>
    </ligand>
</feature>
<feature type="binding site" evidence="1">
    <location>
        <position position="142"/>
    </location>
    <ligand>
        <name>ATP</name>
        <dbReference type="ChEBI" id="CHEBI:30616"/>
    </ligand>
</feature>
<feature type="binding site" evidence="1">
    <location>
        <position position="142"/>
    </location>
    <ligand>
        <name>CTP</name>
        <dbReference type="ChEBI" id="CHEBI:37563"/>
    </ligand>
</feature>
<feature type="binding site" evidence="1">
    <location>
        <position position="161"/>
    </location>
    <ligand>
        <name>ATP</name>
        <dbReference type="ChEBI" id="CHEBI:30616"/>
    </ligand>
</feature>
<feature type="binding site" evidence="1">
    <location>
        <position position="161"/>
    </location>
    <ligand>
        <name>CTP</name>
        <dbReference type="ChEBI" id="CHEBI:37563"/>
    </ligand>
</feature>
<feature type="binding site" evidence="1">
    <location>
        <position position="170"/>
    </location>
    <ligand>
        <name>ATP</name>
        <dbReference type="ChEBI" id="CHEBI:30616"/>
    </ligand>
</feature>
<feature type="binding site" evidence="1">
    <location>
        <position position="170"/>
    </location>
    <ligand>
        <name>CTP</name>
        <dbReference type="ChEBI" id="CHEBI:37563"/>
    </ligand>
</feature>
<keyword id="KW-0067">ATP-binding</keyword>
<keyword id="KW-0460">Magnesium</keyword>
<keyword id="KW-0479">Metal-binding</keyword>
<keyword id="KW-0547">Nucleotide-binding</keyword>
<keyword id="KW-0548">Nucleotidyltransferase</keyword>
<keyword id="KW-1185">Reference proteome</keyword>
<keyword id="KW-0692">RNA repair</keyword>
<keyword id="KW-0694">RNA-binding</keyword>
<keyword id="KW-0808">Transferase</keyword>
<keyword id="KW-0819">tRNA processing</keyword>